<proteinExistence type="inferred from homology"/>
<protein>
    <recommendedName>
        <fullName evidence="1">Large ribosomal subunit protein bL9</fullName>
    </recommendedName>
    <alternativeName>
        <fullName evidence="2">50S ribosomal protein L9</fullName>
    </alternativeName>
</protein>
<feature type="chain" id="PRO_1000060512" description="Large ribosomal subunit protein bL9">
    <location>
        <begin position="1"/>
        <end position="150"/>
    </location>
</feature>
<organism>
    <name type="scientific">Serratia proteamaculans (strain 568)</name>
    <dbReference type="NCBI Taxonomy" id="399741"/>
    <lineage>
        <taxon>Bacteria</taxon>
        <taxon>Pseudomonadati</taxon>
        <taxon>Pseudomonadota</taxon>
        <taxon>Gammaproteobacteria</taxon>
        <taxon>Enterobacterales</taxon>
        <taxon>Yersiniaceae</taxon>
        <taxon>Serratia</taxon>
    </lineage>
</organism>
<gene>
    <name evidence="1" type="primary">rplI</name>
    <name type="ordered locus">Spro_0449</name>
</gene>
<comment type="function">
    <text evidence="1">Binds to the 23S rRNA.</text>
</comment>
<comment type="similarity">
    <text evidence="1">Belongs to the bacterial ribosomal protein bL9 family.</text>
</comment>
<accession>A8G8W7</accession>
<evidence type="ECO:0000255" key="1">
    <source>
        <dbReference type="HAMAP-Rule" id="MF_00503"/>
    </source>
</evidence>
<evidence type="ECO:0000305" key="2"/>
<dbReference type="EMBL" id="CP000826">
    <property type="protein sequence ID" value="ABV39557.1"/>
    <property type="molecule type" value="Genomic_DNA"/>
</dbReference>
<dbReference type="SMR" id="A8G8W7"/>
<dbReference type="STRING" id="399741.Spro_0449"/>
<dbReference type="KEGG" id="spe:Spro_0449"/>
<dbReference type="eggNOG" id="COG0359">
    <property type="taxonomic scope" value="Bacteria"/>
</dbReference>
<dbReference type="HOGENOM" id="CLU_078938_4_1_6"/>
<dbReference type="OrthoDB" id="9788336at2"/>
<dbReference type="GO" id="GO:1990904">
    <property type="term" value="C:ribonucleoprotein complex"/>
    <property type="evidence" value="ECO:0007669"/>
    <property type="project" value="UniProtKB-KW"/>
</dbReference>
<dbReference type="GO" id="GO:0005840">
    <property type="term" value="C:ribosome"/>
    <property type="evidence" value="ECO:0007669"/>
    <property type="project" value="UniProtKB-KW"/>
</dbReference>
<dbReference type="GO" id="GO:0019843">
    <property type="term" value="F:rRNA binding"/>
    <property type="evidence" value="ECO:0007669"/>
    <property type="project" value="UniProtKB-UniRule"/>
</dbReference>
<dbReference type="GO" id="GO:0003735">
    <property type="term" value="F:structural constituent of ribosome"/>
    <property type="evidence" value="ECO:0007669"/>
    <property type="project" value="InterPro"/>
</dbReference>
<dbReference type="GO" id="GO:0006412">
    <property type="term" value="P:translation"/>
    <property type="evidence" value="ECO:0007669"/>
    <property type="project" value="UniProtKB-UniRule"/>
</dbReference>
<dbReference type="FunFam" id="3.10.430.100:FF:000001">
    <property type="entry name" value="50S ribosomal protein L9"/>
    <property type="match status" value="1"/>
</dbReference>
<dbReference type="FunFam" id="3.40.5.10:FF:000001">
    <property type="entry name" value="50S ribosomal protein L9"/>
    <property type="match status" value="1"/>
</dbReference>
<dbReference type="Gene3D" id="3.10.430.100">
    <property type="entry name" value="Ribosomal protein L9, C-terminal domain"/>
    <property type="match status" value="1"/>
</dbReference>
<dbReference type="Gene3D" id="3.40.5.10">
    <property type="entry name" value="Ribosomal protein L9, N-terminal domain"/>
    <property type="match status" value="1"/>
</dbReference>
<dbReference type="HAMAP" id="MF_00503">
    <property type="entry name" value="Ribosomal_bL9"/>
    <property type="match status" value="1"/>
</dbReference>
<dbReference type="InterPro" id="IPR000244">
    <property type="entry name" value="Ribosomal_bL9"/>
</dbReference>
<dbReference type="InterPro" id="IPR009027">
    <property type="entry name" value="Ribosomal_bL9/RNase_H1_N"/>
</dbReference>
<dbReference type="InterPro" id="IPR020594">
    <property type="entry name" value="Ribosomal_bL9_bac/chp"/>
</dbReference>
<dbReference type="InterPro" id="IPR020069">
    <property type="entry name" value="Ribosomal_bL9_C"/>
</dbReference>
<dbReference type="InterPro" id="IPR036791">
    <property type="entry name" value="Ribosomal_bL9_C_sf"/>
</dbReference>
<dbReference type="InterPro" id="IPR020070">
    <property type="entry name" value="Ribosomal_bL9_N"/>
</dbReference>
<dbReference type="InterPro" id="IPR036935">
    <property type="entry name" value="Ribosomal_bL9_N_sf"/>
</dbReference>
<dbReference type="NCBIfam" id="TIGR00158">
    <property type="entry name" value="L9"/>
    <property type="match status" value="1"/>
</dbReference>
<dbReference type="PANTHER" id="PTHR21368">
    <property type="entry name" value="50S RIBOSOMAL PROTEIN L9"/>
    <property type="match status" value="1"/>
</dbReference>
<dbReference type="Pfam" id="PF03948">
    <property type="entry name" value="Ribosomal_L9_C"/>
    <property type="match status" value="1"/>
</dbReference>
<dbReference type="Pfam" id="PF01281">
    <property type="entry name" value="Ribosomal_L9_N"/>
    <property type="match status" value="1"/>
</dbReference>
<dbReference type="SUPFAM" id="SSF55658">
    <property type="entry name" value="L9 N-domain-like"/>
    <property type="match status" value="1"/>
</dbReference>
<dbReference type="SUPFAM" id="SSF55653">
    <property type="entry name" value="Ribosomal protein L9 C-domain"/>
    <property type="match status" value="1"/>
</dbReference>
<dbReference type="PROSITE" id="PS00651">
    <property type="entry name" value="RIBOSOMAL_L9"/>
    <property type="match status" value="1"/>
</dbReference>
<name>RL9_SERP5</name>
<sequence>MQVILLDKVANLGSLGDQVNVKAGYARNFLVPQGKAVPATKKNVEFFEVRRAELEAKLAEILTAAEARATKINELGSVTIASKSGDEGKLFGSIGTRDIADAVTAAGVEVAKSEVRLPNGVLRTTGEHEVQFQVHSDVFAQLNVVVVAEA</sequence>
<keyword id="KW-0687">Ribonucleoprotein</keyword>
<keyword id="KW-0689">Ribosomal protein</keyword>
<keyword id="KW-0694">RNA-binding</keyword>
<keyword id="KW-0699">rRNA-binding</keyword>
<reference key="1">
    <citation type="submission" date="2007-09" db="EMBL/GenBank/DDBJ databases">
        <title>Complete sequence of chromosome of Serratia proteamaculans 568.</title>
        <authorList>
            <consortium name="US DOE Joint Genome Institute"/>
            <person name="Copeland A."/>
            <person name="Lucas S."/>
            <person name="Lapidus A."/>
            <person name="Barry K."/>
            <person name="Glavina del Rio T."/>
            <person name="Dalin E."/>
            <person name="Tice H."/>
            <person name="Pitluck S."/>
            <person name="Chain P."/>
            <person name="Malfatti S."/>
            <person name="Shin M."/>
            <person name="Vergez L."/>
            <person name="Schmutz J."/>
            <person name="Larimer F."/>
            <person name="Land M."/>
            <person name="Hauser L."/>
            <person name="Kyrpides N."/>
            <person name="Kim E."/>
            <person name="Taghavi S."/>
            <person name="Newman L."/>
            <person name="Vangronsveld J."/>
            <person name="van der Lelie D."/>
            <person name="Richardson P."/>
        </authorList>
    </citation>
    <scope>NUCLEOTIDE SEQUENCE [LARGE SCALE GENOMIC DNA]</scope>
    <source>
        <strain>568</strain>
    </source>
</reference>